<organism>
    <name type="scientific">Streptococcus agalactiae serotype III (strain NEM316)</name>
    <dbReference type="NCBI Taxonomy" id="211110"/>
    <lineage>
        <taxon>Bacteria</taxon>
        <taxon>Bacillati</taxon>
        <taxon>Bacillota</taxon>
        <taxon>Bacilli</taxon>
        <taxon>Lactobacillales</taxon>
        <taxon>Streptococcaceae</taxon>
        <taxon>Streptococcus</taxon>
    </lineage>
</organism>
<gene>
    <name evidence="1" type="primary">tgt</name>
    <name type="ordered locus">gbs0432</name>
</gene>
<protein>
    <recommendedName>
        <fullName evidence="1">Queuine tRNA-ribosyltransferase</fullName>
        <ecNumber evidence="1">2.4.2.29</ecNumber>
    </recommendedName>
    <alternativeName>
        <fullName evidence="1">Guanine insertion enzyme</fullName>
    </alternativeName>
    <alternativeName>
        <fullName evidence="1">tRNA-guanine transglycosylase</fullName>
    </alternativeName>
</protein>
<evidence type="ECO:0000255" key="1">
    <source>
        <dbReference type="HAMAP-Rule" id="MF_00168"/>
    </source>
</evidence>
<comment type="function">
    <text evidence="1">Catalyzes the base-exchange of a guanine (G) residue with the queuine precursor 7-aminomethyl-7-deazaguanine (PreQ1) at position 34 (anticodon wobble position) in tRNAs with GU(N) anticodons (tRNA-Asp, -Asn, -His and -Tyr). Catalysis occurs through a double-displacement mechanism. The nucleophile active site attacks the C1' of nucleotide 34 to detach the guanine base from the RNA, forming a covalent enzyme-RNA intermediate. The proton acceptor active site deprotonates the incoming PreQ1, allowing a nucleophilic attack on the C1' of the ribose to form the product. After dissociation, two additional enzymatic reactions on the tRNA convert PreQ1 to queuine (Q), resulting in the hypermodified nucleoside queuosine (7-(((4,5-cis-dihydroxy-2-cyclopenten-1-yl)amino)methyl)-7-deazaguanosine).</text>
</comment>
<comment type="catalytic activity">
    <reaction evidence="1">
        <text>7-aminomethyl-7-carbaguanine + guanosine(34) in tRNA = 7-aminomethyl-7-carbaguanosine(34) in tRNA + guanine</text>
        <dbReference type="Rhea" id="RHEA:24104"/>
        <dbReference type="Rhea" id="RHEA-COMP:10341"/>
        <dbReference type="Rhea" id="RHEA-COMP:10342"/>
        <dbReference type="ChEBI" id="CHEBI:16235"/>
        <dbReference type="ChEBI" id="CHEBI:58703"/>
        <dbReference type="ChEBI" id="CHEBI:74269"/>
        <dbReference type="ChEBI" id="CHEBI:82833"/>
        <dbReference type="EC" id="2.4.2.29"/>
    </reaction>
</comment>
<comment type="cofactor">
    <cofactor evidence="1">
        <name>Zn(2+)</name>
        <dbReference type="ChEBI" id="CHEBI:29105"/>
    </cofactor>
    <text evidence="1">Binds 1 zinc ion per subunit.</text>
</comment>
<comment type="pathway">
    <text evidence="1">tRNA modification; tRNA-queuosine biosynthesis.</text>
</comment>
<comment type="subunit">
    <text evidence="1">Homodimer. Within each dimer, one monomer is responsible for RNA recognition and catalysis, while the other monomer binds to the replacement base PreQ1.</text>
</comment>
<comment type="similarity">
    <text evidence="1">Belongs to the queuine tRNA-ribosyltransferase family.</text>
</comment>
<reference key="1">
    <citation type="journal article" date="2002" name="Mol. Microbiol.">
        <title>Genome sequence of Streptococcus agalactiae, a pathogen causing invasive neonatal disease.</title>
        <authorList>
            <person name="Glaser P."/>
            <person name="Rusniok C."/>
            <person name="Buchrieser C."/>
            <person name="Chevalier F."/>
            <person name="Frangeul L."/>
            <person name="Msadek T."/>
            <person name="Zouine M."/>
            <person name="Couve E."/>
            <person name="Lalioui L."/>
            <person name="Poyart C."/>
            <person name="Trieu-Cuot P."/>
            <person name="Kunst F."/>
        </authorList>
    </citation>
    <scope>NUCLEOTIDE SEQUENCE [LARGE SCALE GENOMIC DNA]</scope>
    <source>
        <strain>NEM316</strain>
    </source>
</reference>
<sequence>MTDHPIKYRLIKQEKHTGARLGEIITPHGTFPTPMFMPVGTQATVKTQSPEELKEMGSGIILSNTYHLWLRPGDELIAKAGGLHKFMNWDQAILTDSGGFQVYSLADSRNITEEGVTFKNHLNGAKMFLSPEKAISIQNNLGSDIMMSFDECPQFYQPYDYVKKSIERTSRWAERGLNAHRRPHDQGLFGIVQGAGFEDLRRQSARDLVSMDFPGYSIGGLAVGETHDEMNAVLDFTVPMLPNDKPRYLMGVGAPDSLIDAVIRGVDMFDCVLPTRIARNGTCMTSQGRLVVKNAKFAEDFTPLDPNCDCYTCKNYTRAYIRHLLKADETFGIRLTSYHNLYFLVNLMKDVRQAIMDDNLLEFRQDFMERYGYGMNNRNF</sequence>
<keyword id="KW-0328">Glycosyltransferase</keyword>
<keyword id="KW-0479">Metal-binding</keyword>
<keyword id="KW-0671">Queuosine biosynthesis</keyword>
<keyword id="KW-0808">Transferase</keyword>
<keyword id="KW-0819">tRNA processing</keyword>
<keyword id="KW-0862">Zinc</keyword>
<name>TGT_STRA3</name>
<dbReference type="EC" id="2.4.2.29" evidence="1"/>
<dbReference type="EMBL" id="AL766845">
    <property type="protein sequence ID" value="CAD46076.1"/>
    <property type="molecule type" value="Genomic_DNA"/>
</dbReference>
<dbReference type="RefSeq" id="WP_000129510.1">
    <property type="nucleotide sequence ID" value="NC_004368.1"/>
</dbReference>
<dbReference type="SMR" id="Q8E6X6"/>
<dbReference type="KEGG" id="san:tgt"/>
<dbReference type="eggNOG" id="COG0343">
    <property type="taxonomic scope" value="Bacteria"/>
</dbReference>
<dbReference type="HOGENOM" id="CLU_022060_0_1_9"/>
<dbReference type="UniPathway" id="UPA00392"/>
<dbReference type="Proteomes" id="UP000000823">
    <property type="component" value="Chromosome"/>
</dbReference>
<dbReference type="GO" id="GO:0005829">
    <property type="term" value="C:cytosol"/>
    <property type="evidence" value="ECO:0007669"/>
    <property type="project" value="TreeGrafter"/>
</dbReference>
<dbReference type="GO" id="GO:0046872">
    <property type="term" value="F:metal ion binding"/>
    <property type="evidence" value="ECO:0007669"/>
    <property type="project" value="UniProtKB-KW"/>
</dbReference>
<dbReference type="GO" id="GO:0008479">
    <property type="term" value="F:tRNA-guanosine(34) queuine transglycosylase activity"/>
    <property type="evidence" value="ECO:0007669"/>
    <property type="project" value="UniProtKB-UniRule"/>
</dbReference>
<dbReference type="GO" id="GO:0008616">
    <property type="term" value="P:queuosine biosynthetic process"/>
    <property type="evidence" value="ECO:0007669"/>
    <property type="project" value="UniProtKB-UniRule"/>
</dbReference>
<dbReference type="GO" id="GO:0002099">
    <property type="term" value="P:tRNA wobble guanine modification"/>
    <property type="evidence" value="ECO:0007669"/>
    <property type="project" value="TreeGrafter"/>
</dbReference>
<dbReference type="GO" id="GO:0101030">
    <property type="term" value="P:tRNA-guanine transglycosylation"/>
    <property type="evidence" value="ECO:0007669"/>
    <property type="project" value="InterPro"/>
</dbReference>
<dbReference type="FunFam" id="3.20.20.105:FF:000001">
    <property type="entry name" value="Queuine tRNA-ribosyltransferase"/>
    <property type="match status" value="1"/>
</dbReference>
<dbReference type="Gene3D" id="3.20.20.105">
    <property type="entry name" value="Queuine tRNA-ribosyltransferase-like"/>
    <property type="match status" value="1"/>
</dbReference>
<dbReference type="HAMAP" id="MF_00168">
    <property type="entry name" value="Q_tRNA_Tgt"/>
    <property type="match status" value="1"/>
</dbReference>
<dbReference type="InterPro" id="IPR050076">
    <property type="entry name" value="ArchSynthase1/Queuine_TRR"/>
</dbReference>
<dbReference type="InterPro" id="IPR004803">
    <property type="entry name" value="TGT"/>
</dbReference>
<dbReference type="InterPro" id="IPR036511">
    <property type="entry name" value="TGT-like_sf"/>
</dbReference>
<dbReference type="InterPro" id="IPR002616">
    <property type="entry name" value="tRNA_ribo_trans-like"/>
</dbReference>
<dbReference type="NCBIfam" id="TIGR00430">
    <property type="entry name" value="Q_tRNA_tgt"/>
    <property type="match status" value="1"/>
</dbReference>
<dbReference type="NCBIfam" id="TIGR00449">
    <property type="entry name" value="tgt_general"/>
    <property type="match status" value="1"/>
</dbReference>
<dbReference type="PANTHER" id="PTHR46499">
    <property type="entry name" value="QUEUINE TRNA-RIBOSYLTRANSFERASE"/>
    <property type="match status" value="1"/>
</dbReference>
<dbReference type="PANTHER" id="PTHR46499:SF1">
    <property type="entry name" value="QUEUINE TRNA-RIBOSYLTRANSFERASE"/>
    <property type="match status" value="1"/>
</dbReference>
<dbReference type="Pfam" id="PF01702">
    <property type="entry name" value="TGT"/>
    <property type="match status" value="1"/>
</dbReference>
<dbReference type="SUPFAM" id="SSF51713">
    <property type="entry name" value="tRNA-guanine transglycosylase"/>
    <property type="match status" value="1"/>
</dbReference>
<proteinExistence type="inferred from homology"/>
<feature type="chain" id="PRO_0000135530" description="Queuine tRNA-ribosyltransferase">
    <location>
        <begin position="1"/>
        <end position="380"/>
    </location>
</feature>
<feature type="region of interest" description="RNA binding" evidence="1">
    <location>
        <begin position="251"/>
        <end position="257"/>
    </location>
</feature>
<feature type="region of interest" description="RNA binding; important for wobble base 34 recognition" evidence="1">
    <location>
        <begin position="275"/>
        <end position="279"/>
    </location>
</feature>
<feature type="active site" description="Proton acceptor" evidence="1">
    <location>
        <position position="96"/>
    </location>
</feature>
<feature type="active site" description="Nucleophile" evidence="1">
    <location>
        <position position="270"/>
    </location>
</feature>
<feature type="binding site" evidence="1">
    <location>
        <begin position="96"/>
        <end position="100"/>
    </location>
    <ligand>
        <name>substrate</name>
    </ligand>
</feature>
<feature type="binding site" evidence="1">
    <location>
        <position position="150"/>
    </location>
    <ligand>
        <name>substrate</name>
    </ligand>
</feature>
<feature type="binding site" evidence="1">
    <location>
        <position position="193"/>
    </location>
    <ligand>
        <name>substrate</name>
    </ligand>
</feature>
<feature type="binding site" evidence="1">
    <location>
        <position position="220"/>
    </location>
    <ligand>
        <name>substrate</name>
    </ligand>
</feature>
<feature type="binding site" evidence="1">
    <location>
        <position position="308"/>
    </location>
    <ligand>
        <name>Zn(2+)</name>
        <dbReference type="ChEBI" id="CHEBI:29105"/>
    </ligand>
</feature>
<feature type="binding site" evidence="1">
    <location>
        <position position="310"/>
    </location>
    <ligand>
        <name>Zn(2+)</name>
        <dbReference type="ChEBI" id="CHEBI:29105"/>
    </ligand>
</feature>
<feature type="binding site" evidence="1">
    <location>
        <position position="313"/>
    </location>
    <ligand>
        <name>Zn(2+)</name>
        <dbReference type="ChEBI" id="CHEBI:29105"/>
    </ligand>
</feature>
<feature type="binding site" evidence="1">
    <location>
        <position position="339"/>
    </location>
    <ligand>
        <name>Zn(2+)</name>
        <dbReference type="ChEBI" id="CHEBI:29105"/>
    </ligand>
</feature>
<accession>Q8E6X6</accession>